<geneLocation type="mitochondrion"/>
<sequence>MAYPFQLGLQDATSPIMEELLHFHDHALMIVFLISSLVLYIISLMLTTKLTHTSTMDAQEVETVWTILPAIILILIALPSLRILYMMDEINNPSLTVKTMGHQWYWSYEYTDYEDLNFDSYMIPTQELKPGELRLLEVDNRVVLPMEMTIRMLISSEDVLHSWAVPSLGLKTDAIPGRLNQTTLMAMRPGLYYGQCSEICGSNHSFMPIVLEMVPLSYFETWSALMV</sequence>
<accession>O47669</accession>
<reference key="1">
    <citation type="journal article" date="1997" name="Syst. Biol.">
        <title>Molecular systematics of the Canidae.</title>
        <authorList>
            <person name="Wayne R.K."/>
            <person name="Geffen E."/>
            <person name="Girman D.J."/>
            <person name="Koepfli K.-P."/>
            <person name="Lau L.M."/>
            <person name="Marshall C.R."/>
        </authorList>
    </citation>
    <scope>NUCLEOTIDE SEQUENCE [GENOMIC DNA]</scope>
</reference>
<feature type="chain" id="PRO_0000183531" description="Cytochrome c oxidase subunit 2">
    <location>
        <begin position="1"/>
        <end position="227"/>
    </location>
</feature>
<feature type="topological domain" description="Mitochondrial intermembrane" evidence="4">
    <location>
        <begin position="1"/>
        <end position="14"/>
    </location>
</feature>
<feature type="transmembrane region" description="Helical; Name=I" evidence="4">
    <location>
        <begin position="15"/>
        <end position="45"/>
    </location>
</feature>
<feature type="topological domain" description="Mitochondrial matrix" evidence="4">
    <location>
        <begin position="46"/>
        <end position="59"/>
    </location>
</feature>
<feature type="transmembrane region" description="Helical; Name=II" evidence="4">
    <location>
        <begin position="60"/>
        <end position="87"/>
    </location>
</feature>
<feature type="topological domain" description="Mitochondrial intermembrane" evidence="4">
    <location>
        <begin position="88"/>
        <end position="227"/>
    </location>
</feature>
<feature type="binding site" evidence="4">
    <location>
        <position position="161"/>
    </location>
    <ligand>
        <name>Cu cation</name>
        <dbReference type="ChEBI" id="CHEBI:23378"/>
        <label>A1</label>
    </ligand>
</feature>
<feature type="binding site" evidence="4">
    <location>
        <position position="196"/>
    </location>
    <ligand>
        <name>Cu cation</name>
        <dbReference type="ChEBI" id="CHEBI:23378"/>
        <label>A1</label>
    </ligand>
</feature>
<feature type="binding site" evidence="4">
    <location>
        <position position="196"/>
    </location>
    <ligand>
        <name>Cu cation</name>
        <dbReference type="ChEBI" id="CHEBI:23378"/>
        <label>A2</label>
    </ligand>
</feature>
<feature type="binding site" evidence="4">
    <location>
        <position position="198"/>
    </location>
    <ligand>
        <name>Cu cation</name>
        <dbReference type="ChEBI" id="CHEBI:23378"/>
        <label>A2</label>
    </ligand>
</feature>
<feature type="binding site" evidence="4">
    <location>
        <position position="198"/>
    </location>
    <ligand>
        <name>Mg(2+)</name>
        <dbReference type="ChEBI" id="CHEBI:18420"/>
        <note>ligand shared with MT-CO1</note>
    </ligand>
</feature>
<feature type="binding site" evidence="4">
    <location>
        <position position="200"/>
    </location>
    <ligand>
        <name>Cu cation</name>
        <dbReference type="ChEBI" id="CHEBI:23378"/>
        <label>A1</label>
    </ligand>
</feature>
<feature type="binding site" evidence="4">
    <location>
        <position position="200"/>
    </location>
    <ligand>
        <name>Cu cation</name>
        <dbReference type="ChEBI" id="CHEBI:23378"/>
        <label>A2</label>
    </ligand>
</feature>
<feature type="binding site" evidence="4">
    <location>
        <position position="204"/>
    </location>
    <ligand>
        <name>Cu cation</name>
        <dbReference type="ChEBI" id="CHEBI:23378"/>
        <label>A2</label>
    </ligand>
</feature>
<feature type="binding site" evidence="4">
    <location>
        <position position="207"/>
    </location>
    <ligand>
        <name>Cu cation</name>
        <dbReference type="ChEBI" id="CHEBI:23378"/>
        <label>A1</label>
    </ligand>
</feature>
<feature type="modified residue" description="Phosphotyrosine" evidence="2">
    <location>
        <position position="218"/>
    </location>
</feature>
<gene>
    <name type="primary">MT-CO2</name>
    <name type="synonym">COII</name>
    <name type="synonym">COX2</name>
    <name type="synonym">COXII</name>
    <name type="synonym">MTCO2</name>
</gene>
<protein>
    <recommendedName>
        <fullName>Cytochrome c oxidase subunit 2</fullName>
        <ecNumber>7.1.1.9</ecNumber>
    </recommendedName>
    <alternativeName>
        <fullName>Cytochrome c oxidase polypeptide II</fullName>
    </alternativeName>
</protein>
<dbReference type="EC" id="7.1.1.9"/>
<dbReference type="EMBL" id="AF028210">
    <property type="protein sequence ID" value="AAC00103.1"/>
    <property type="molecule type" value="Genomic_DNA"/>
</dbReference>
<dbReference type="SMR" id="O47669"/>
<dbReference type="GO" id="GO:0005743">
    <property type="term" value="C:mitochondrial inner membrane"/>
    <property type="evidence" value="ECO:0007669"/>
    <property type="project" value="UniProtKB-SubCell"/>
</dbReference>
<dbReference type="GO" id="GO:0045277">
    <property type="term" value="C:respiratory chain complex IV"/>
    <property type="evidence" value="ECO:0000250"/>
    <property type="project" value="UniProtKB"/>
</dbReference>
<dbReference type="GO" id="GO:0005507">
    <property type="term" value="F:copper ion binding"/>
    <property type="evidence" value="ECO:0007669"/>
    <property type="project" value="InterPro"/>
</dbReference>
<dbReference type="GO" id="GO:0004129">
    <property type="term" value="F:cytochrome-c oxidase activity"/>
    <property type="evidence" value="ECO:0007669"/>
    <property type="project" value="UniProtKB-EC"/>
</dbReference>
<dbReference type="GO" id="GO:0042773">
    <property type="term" value="P:ATP synthesis coupled electron transport"/>
    <property type="evidence" value="ECO:0007669"/>
    <property type="project" value="TreeGrafter"/>
</dbReference>
<dbReference type="CDD" id="cd13912">
    <property type="entry name" value="CcO_II_C"/>
    <property type="match status" value="1"/>
</dbReference>
<dbReference type="FunFam" id="1.10.287.90:FF:000001">
    <property type="entry name" value="Cytochrome c oxidase subunit 2"/>
    <property type="match status" value="1"/>
</dbReference>
<dbReference type="FunFam" id="2.60.40.420:FF:000001">
    <property type="entry name" value="Cytochrome c oxidase subunit 2"/>
    <property type="match status" value="1"/>
</dbReference>
<dbReference type="Gene3D" id="1.10.287.90">
    <property type="match status" value="1"/>
</dbReference>
<dbReference type="Gene3D" id="2.60.40.420">
    <property type="entry name" value="Cupredoxins - blue copper proteins"/>
    <property type="match status" value="1"/>
</dbReference>
<dbReference type="InterPro" id="IPR045187">
    <property type="entry name" value="CcO_II"/>
</dbReference>
<dbReference type="InterPro" id="IPR002429">
    <property type="entry name" value="CcO_II-like_C"/>
</dbReference>
<dbReference type="InterPro" id="IPR034210">
    <property type="entry name" value="CcO_II_C"/>
</dbReference>
<dbReference type="InterPro" id="IPR001505">
    <property type="entry name" value="Copper_CuA"/>
</dbReference>
<dbReference type="InterPro" id="IPR008972">
    <property type="entry name" value="Cupredoxin"/>
</dbReference>
<dbReference type="InterPro" id="IPR014222">
    <property type="entry name" value="Cyt_c_oxidase_su2"/>
</dbReference>
<dbReference type="InterPro" id="IPR011759">
    <property type="entry name" value="Cyt_c_oxidase_su2_TM_dom"/>
</dbReference>
<dbReference type="InterPro" id="IPR036257">
    <property type="entry name" value="Cyt_c_oxidase_su2_TM_sf"/>
</dbReference>
<dbReference type="NCBIfam" id="TIGR02866">
    <property type="entry name" value="CoxB"/>
    <property type="match status" value="1"/>
</dbReference>
<dbReference type="PANTHER" id="PTHR22888:SF9">
    <property type="entry name" value="CYTOCHROME C OXIDASE SUBUNIT 2"/>
    <property type="match status" value="1"/>
</dbReference>
<dbReference type="PANTHER" id="PTHR22888">
    <property type="entry name" value="CYTOCHROME C OXIDASE, SUBUNIT II"/>
    <property type="match status" value="1"/>
</dbReference>
<dbReference type="Pfam" id="PF00116">
    <property type="entry name" value="COX2"/>
    <property type="match status" value="1"/>
</dbReference>
<dbReference type="Pfam" id="PF02790">
    <property type="entry name" value="COX2_TM"/>
    <property type="match status" value="1"/>
</dbReference>
<dbReference type="PRINTS" id="PR01166">
    <property type="entry name" value="CYCOXIDASEII"/>
</dbReference>
<dbReference type="SUPFAM" id="SSF49503">
    <property type="entry name" value="Cupredoxins"/>
    <property type="match status" value="1"/>
</dbReference>
<dbReference type="SUPFAM" id="SSF81464">
    <property type="entry name" value="Cytochrome c oxidase subunit II-like, transmembrane region"/>
    <property type="match status" value="1"/>
</dbReference>
<dbReference type="PROSITE" id="PS00078">
    <property type="entry name" value="COX2"/>
    <property type="match status" value="1"/>
</dbReference>
<dbReference type="PROSITE" id="PS50857">
    <property type="entry name" value="COX2_CUA"/>
    <property type="match status" value="1"/>
</dbReference>
<dbReference type="PROSITE" id="PS50999">
    <property type="entry name" value="COX2_TM"/>
    <property type="match status" value="1"/>
</dbReference>
<keyword id="KW-0186">Copper</keyword>
<keyword id="KW-0249">Electron transport</keyword>
<keyword id="KW-0460">Magnesium</keyword>
<keyword id="KW-0472">Membrane</keyword>
<keyword id="KW-0479">Metal-binding</keyword>
<keyword id="KW-0496">Mitochondrion</keyword>
<keyword id="KW-0999">Mitochondrion inner membrane</keyword>
<keyword id="KW-0597">Phosphoprotein</keyword>
<keyword id="KW-0679">Respiratory chain</keyword>
<keyword id="KW-1278">Translocase</keyword>
<keyword id="KW-0812">Transmembrane</keyword>
<keyword id="KW-1133">Transmembrane helix</keyword>
<keyword id="KW-0813">Transport</keyword>
<name>COX2_CANAU</name>
<evidence type="ECO:0000250" key="1">
    <source>
        <dbReference type="UniProtKB" id="P00403"/>
    </source>
</evidence>
<evidence type="ECO:0000250" key="2">
    <source>
        <dbReference type="UniProtKB" id="P00406"/>
    </source>
</evidence>
<evidence type="ECO:0000250" key="3">
    <source>
        <dbReference type="UniProtKB" id="P00410"/>
    </source>
</evidence>
<evidence type="ECO:0000250" key="4">
    <source>
        <dbReference type="UniProtKB" id="P68530"/>
    </source>
</evidence>
<evidence type="ECO:0000305" key="5"/>
<comment type="function">
    <text evidence="3">Component of the cytochrome c oxidase, the last enzyme in the mitochondrial electron transport chain which drives oxidative phosphorylation. The respiratory chain contains 3 multisubunit complexes succinate dehydrogenase (complex II, CII), ubiquinol-cytochrome c oxidoreductase (cytochrome b-c1 complex, complex III, CIII) and cytochrome c oxidase (complex IV, CIV), that cooperate to transfer electrons derived from NADH and succinate to molecular oxygen, creating an electrochemical gradient over the inner membrane that drives transmembrane transport and the ATP synthase. Cytochrome c oxidase is the component of the respiratory chain that catalyzes the reduction of oxygen to water. Electrons originating from reduced cytochrome c in the intermembrane space (IMS) are transferred via the dinuclear copper A center (CU(A)) of subunit 2 and heme A of subunit 1 to the active site in subunit 1, a binuclear center (BNC) formed by heme A3 and copper B (CU(B)). The BNC reduces molecular oxygen to 2 water molecules using 4 electrons from cytochrome c in the IMS and 4 protons from the mitochondrial matrix.</text>
</comment>
<comment type="catalytic activity">
    <reaction evidence="3">
        <text>4 Fe(II)-[cytochrome c] + O2 + 8 H(+)(in) = 4 Fe(III)-[cytochrome c] + 2 H2O + 4 H(+)(out)</text>
        <dbReference type="Rhea" id="RHEA:11436"/>
        <dbReference type="Rhea" id="RHEA-COMP:10350"/>
        <dbReference type="Rhea" id="RHEA-COMP:14399"/>
        <dbReference type="ChEBI" id="CHEBI:15377"/>
        <dbReference type="ChEBI" id="CHEBI:15378"/>
        <dbReference type="ChEBI" id="CHEBI:15379"/>
        <dbReference type="ChEBI" id="CHEBI:29033"/>
        <dbReference type="ChEBI" id="CHEBI:29034"/>
        <dbReference type="EC" id="7.1.1.9"/>
    </reaction>
    <physiologicalReaction direction="left-to-right" evidence="3">
        <dbReference type="Rhea" id="RHEA:11437"/>
    </physiologicalReaction>
</comment>
<comment type="cofactor">
    <cofactor evidence="4">
        <name>Cu cation</name>
        <dbReference type="ChEBI" id="CHEBI:23378"/>
    </cofactor>
    <text evidence="4">Binds a dinuclear copper A center per subunit.</text>
</comment>
<comment type="subunit">
    <text evidence="1 4">Component of the cytochrome c oxidase (complex IV, CIV), a multisubunit enzyme composed of 14 subunits. The complex is composed of a catalytic core of 3 subunits MT-CO1, MT-CO2 and MT-CO3, encoded in the mitochondrial DNA, and 11 supernumerary subunits COX4I, COX5A, COX5B, COX6A, COX6B, COX6C, COX7A, COX7B, COX7C, COX8 and NDUFA4, which are encoded in the nuclear genome. The complex exists as a monomer or a dimer and forms supercomplexes (SCs) in the inner mitochondrial membrane with NADH-ubiquinone oxidoreductase (complex I, CI) and ubiquinol-cytochrome c oxidoreductase (cytochrome b-c1 complex, complex III, CIII), resulting in different assemblies (supercomplex SCI(1)III(2)IV(1) and megacomplex MCI(2)III(2)IV(2)) (By similarity). Found in a complex with TMEM177, COA6, COX18, COX20, SCO1 and SCO2. Interacts with TMEM177 in a COX20-dependent manner. Interacts with COX20. Interacts with COX16 (By similarity).</text>
</comment>
<comment type="subcellular location">
    <subcellularLocation>
        <location evidence="4">Mitochondrion inner membrane</location>
        <topology evidence="4">Multi-pass membrane protein</topology>
    </subcellularLocation>
</comment>
<comment type="similarity">
    <text evidence="5">Belongs to the cytochrome c oxidase subunit 2 family.</text>
</comment>
<proteinExistence type="inferred from homology"/>
<organism>
    <name type="scientific">Canis aureus</name>
    <name type="common">Golden jackal</name>
    <dbReference type="NCBI Taxonomy" id="68724"/>
    <lineage>
        <taxon>Eukaryota</taxon>
        <taxon>Metazoa</taxon>
        <taxon>Chordata</taxon>
        <taxon>Craniata</taxon>
        <taxon>Vertebrata</taxon>
        <taxon>Euteleostomi</taxon>
        <taxon>Mammalia</taxon>
        <taxon>Eutheria</taxon>
        <taxon>Laurasiatheria</taxon>
        <taxon>Carnivora</taxon>
        <taxon>Caniformia</taxon>
        <taxon>Canidae</taxon>
        <taxon>Canis</taxon>
    </lineage>
</organism>